<protein>
    <recommendedName>
        <fullName evidence="1">Queuine tRNA-ribosyltransferase</fullName>
        <ecNumber evidence="1">2.4.2.29</ecNumber>
    </recommendedName>
    <alternativeName>
        <fullName evidence="1">Guanine insertion enzyme</fullName>
    </alternativeName>
    <alternativeName>
        <fullName evidence="1">tRNA-guanine transglycosylase</fullName>
    </alternativeName>
</protein>
<proteinExistence type="inferred from homology"/>
<sequence length="380" mass="43121">MSDSPIKYRLIKKEKHTGARLGEIITPHGTFPTPMFMPVGTQATVKTQSPEELKEMGSGIILSNTYHLWLRPGDELIARAGGLHKFMNWDQPILTDSGGFQVYSLADSRNITEEGVTFKNHLNGSKMFLSPEKAISIQNNLGSDIMMSFDECPQFYQPYDYVKKSIERTSRWAERGLKAHRRPHDQGLFGIVQGAGFEDLRRQSAHDLVSMDFSGYSIGGLAVGETHEEMNAVLDFTTQLLPENKPRYLMGVGAPDSLIDGVIRGVDMFDCVLPTRIARNGTCMTSQGRLVVKNAQFAEDFTPLDPECDCYTCNNYTRAYLRHLLKADETFGIRLTSYHNLYFLLNLMKQVRQAIMDDNLLEFREYFVEKYGYNKSGRNF</sequence>
<name>TGT_STRR6</name>
<evidence type="ECO:0000255" key="1">
    <source>
        <dbReference type="HAMAP-Rule" id="MF_00168"/>
    </source>
</evidence>
<comment type="function">
    <text evidence="1">Catalyzes the base-exchange of a guanine (G) residue with the queuine precursor 7-aminomethyl-7-deazaguanine (PreQ1) at position 34 (anticodon wobble position) in tRNAs with GU(N) anticodons (tRNA-Asp, -Asn, -His and -Tyr). Catalysis occurs through a double-displacement mechanism. The nucleophile active site attacks the C1' of nucleotide 34 to detach the guanine base from the RNA, forming a covalent enzyme-RNA intermediate. The proton acceptor active site deprotonates the incoming PreQ1, allowing a nucleophilic attack on the C1' of the ribose to form the product. After dissociation, two additional enzymatic reactions on the tRNA convert PreQ1 to queuine (Q), resulting in the hypermodified nucleoside queuosine (7-(((4,5-cis-dihydroxy-2-cyclopenten-1-yl)amino)methyl)-7-deazaguanosine).</text>
</comment>
<comment type="catalytic activity">
    <reaction evidence="1">
        <text>7-aminomethyl-7-carbaguanine + guanosine(34) in tRNA = 7-aminomethyl-7-carbaguanosine(34) in tRNA + guanine</text>
        <dbReference type="Rhea" id="RHEA:24104"/>
        <dbReference type="Rhea" id="RHEA-COMP:10341"/>
        <dbReference type="Rhea" id="RHEA-COMP:10342"/>
        <dbReference type="ChEBI" id="CHEBI:16235"/>
        <dbReference type="ChEBI" id="CHEBI:58703"/>
        <dbReference type="ChEBI" id="CHEBI:74269"/>
        <dbReference type="ChEBI" id="CHEBI:82833"/>
        <dbReference type="EC" id="2.4.2.29"/>
    </reaction>
</comment>
<comment type="cofactor">
    <cofactor evidence="1">
        <name>Zn(2+)</name>
        <dbReference type="ChEBI" id="CHEBI:29105"/>
    </cofactor>
    <text evidence="1">Binds 1 zinc ion per subunit.</text>
</comment>
<comment type="pathway">
    <text evidence="1">tRNA modification; tRNA-queuosine biosynthesis.</text>
</comment>
<comment type="subunit">
    <text evidence="1">Homodimer. Within each dimer, one monomer is responsible for RNA recognition and catalysis, while the other monomer binds to the replacement base PreQ1.</text>
</comment>
<comment type="similarity">
    <text evidence="1">Belongs to the queuine tRNA-ribosyltransferase family.</text>
</comment>
<accession>P66908</accession>
<accession>Q97NH1</accession>
<organism>
    <name type="scientific">Streptococcus pneumoniae (strain ATCC BAA-255 / R6)</name>
    <dbReference type="NCBI Taxonomy" id="171101"/>
    <lineage>
        <taxon>Bacteria</taxon>
        <taxon>Bacillati</taxon>
        <taxon>Bacillota</taxon>
        <taxon>Bacilli</taxon>
        <taxon>Lactobacillales</taxon>
        <taxon>Streptococcaceae</taxon>
        <taxon>Streptococcus</taxon>
    </lineage>
</organism>
<keyword id="KW-0328">Glycosyltransferase</keyword>
<keyword id="KW-0479">Metal-binding</keyword>
<keyword id="KW-0671">Queuosine biosynthesis</keyword>
<keyword id="KW-1185">Reference proteome</keyword>
<keyword id="KW-0808">Transferase</keyword>
<keyword id="KW-0819">tRNA processing</keyword>
<keyword id="KW-0862">Zinc</keyword>
<gene>
    <name evidence="1" type="primary">tgt</name>
    <name type="ordered locus">spr1869</name>
</gene>
<dbReference type="EC" id="2.4.2.29" evidence="1"/>
<dbReference type="EMBL" id="AE007317">
    <property type="protein sequence ID" value="AAL00671.1"/>
    <property type="molecule type" value="Genomic_DNA"/>
</dbReference>
<dbReference type="PIR" id="B98105">
    <property type="entry name" value="B98105"/>
</dbReference>
<dbReference type="RefSeq" id="NP_359460.1">
    <property type="nucleotide sequence ID" value="NC_003098.1"/>
</dbReference>
<dbReference type="RefSeq" id="WP_001285241.1">
    <property type="nucleotide sequence ID" value="NC_003098.1"/>
</dbReference>
<dbReference type="SMR" id="P66908"/>
<dbReference type="STRING" id="171101.spr1869"/>
<dbReference type="KEGG" id="spr:spr1869"/>
<dbReference type="PATRIC" id="fig|171101.6.peg.2016"/>
<dbReference type="eggNOG" id="COG0343">
    <property type="taxonomic scope" value="Bacteria"/>
</dbReference>
<dbReference type="HOGENOM" id="CLU_022060_0_1_9"/>
<dbReference type="UniPathway" id="UPA00392"/>
<dbReference type="Proteomes" id="UP000000586">
    <property type="component" value="Chromosome"/>
</dbReference>
<dbReference type="GO" id="GO:0005737">
    <property type="term" value="C:cytoplasm"/>
    <property type="evidence" value="ECO:0000318"/>
    <property type="project" value="GO_Central"/>
</dbReference>
<dbReference type="GO" id="GO:0005829">
    <property type="term" value="C:cytosol"/>
    <property type="evidence" value="ECO:0000318"/>
    <property type="project" value="GO_Central"/>
</dbReference>
<dbReference type="GO" id="GO:0046872">
    <property type="term" value="F:metal ion binding"/>
    <property type="evidence" value="ECO:0007669"/>
    <property type="project" value="UniProtKB-KW"/>
</dbReference>
<dbReference type="GO" id="GO:0008479">
    <property type="term" value="F:tRNA-guanosine(34) queuine transglycosylase activity"/>
    <property type="evidence" value="ECO:0007669"/>
    <property type="project" value="UniProtKB-UniRule"/>
</dbReference>
<dbReference type="GO" id="GO:0008616">
    <property type="term" value="P:queuosine biosynthetic process"/>
    <property type="evidence" value="ECO:0000318"/>
    <property type="project" value="GO_Central"/>
</dbReference>
<dbReference type="GO" id="GO:0002099">
    <property type="term" value="P:tRNA wobble guanine modification"/>
    <property type="evidence" value="ECO:0000318"/>
    <property type="project" value="GO_Central"/>
</dbReference>
<dbReference type="GO" id="GO:0101030">
    <property type="term" value="P:tRNA-guanine transglycosylation"/>
    <property type="evidence" value="ECO:0007669"/>
    <property type="project" value="InterPro"/>
</dbReference>
<dbReference type="FunFam" id="3.20.20.105:FF:000001">
    <property type="entry name" value="Queuine tRNA-ribosyltransferase"/>
    <property type="match status" value="1"/>
</dbReference>
<dbReference type="Gene3D" id="3.20.20.105">
    <property type="entry name" value="Queuine tRNA-ribosyltransferase-like"/>
    <property type="match status" value="1"/>
</dbReference>
<dbReference type="HAMAP" id="MF_00168">
    <property type="entry name" value="Q_tRNA_Tgt"/>
    <property type="match status" value="1"/>
</dbReference>
<dbReference type="InterPro" id="IPR050076">
    <property type="entry name" value="ArchSynthase1/Queuine_TRR"/>
</dbReference>
<dbReference type="InterPro" id="IPR004803">
    <property type="entry name" value="TGT"/>
</dbReference>
<dbReference type="InterPro" id="IPR036511">
    <property type="entry name" value="TGT-like_sf"/>
</dbReference>
<dbReference type="InterPro" id="IPR002616">
    <property type="entry name" value="tRNA_ribo_trans-like"/>
</dbReference>
<dbReference type="NCBIfam" id="TIGR00430">
    <property type="entry name" value="Q_tRNA_tgt"/>
    <property type="match status" value="1"/>
</dbReference>
<dbReference type="NCBIfam" id="TIGR00449">
    <property type="entry name" value="tgt_general"/>
    <property type="match status" value="1"/>
</dbReference>
<dbReference type="PANTHER" id="PTHR46499">
    <property type="entry name" value="QUEUINE TRNA-RIBOSYLTRANSFERASE"/>
    <property type="match status" value="1"/>
</dbReference>
<dbReference type="PANTHER" id="PTHR46499:SF1">
    <property type="entry name" value="QUEUINE TRNA-RIBOSYLTRANSFERASE"/>
    <property type="match status" value="1"/>
</dbReference>
<dbReference type="Pfam" id="PF01702">
    <property type="entry name" value="TGT"/>
    <property type="match status" value="1"/>
</dbReference>
<dbReference type="SUPFAM" id="SSF51713">
    <property type="entry name" value="tRNA-guanine transglycosylase"/>
    <property type="match status" value="1"/>
</dbReference>
<reference key="1">
    <citation type="journal article" date="2001" name="J. Bacteriol.">
        <title>Genome of the bacterium Streptococcus pneumoniae strain R6.</title>
        <authorList>
            <person name="Hoskins J."/>
            <person name="Alborn W.E. Jr."/>
            <person name="Arnold J."/>
            <person name="Blaszczak L.C."/>
            <person name="Burgett S."/>
            <person name="DeHoff B.S."/>
            <person name="Estrem S.T."/>
            <person name="Fritz L."/>
            <person name="Fu D.-J."/>
            <person name="Fuller W."/>
            <person name="Geringer C."/>
            <person name="Gilmour R."/>
            <person name="Glass J.S."/>
            <person name="Khoja H."/>
            <person name="Kraft A.R."/>
            <person name="Lagace R.E."/>
            <person name="LeBlanc D.J."/>
            <person name="Lee L.N."/>
            <person name="Lefkowitz E.J."/>
            <person name="Lu J."/>
            <person name="Matsushima P."/>
            <person name="McAhren S.M."/>
            <person name="McHenney M."/>
            <person name="McLeaster K."/>
            <person name="Mundy C.W."/>
            <person name="Nicas T.I."/>
            <person name="Norris F.H."/>
            <person name="O'Gara M."/>
            <person name="Peery R.B."/>
            <person name="Robertson G.T."/>
            <person name="Rockey P."/>
            <person name="Sun P.-M."/>
            <person name="Winkler M.E."/>
            <person name="Yang Y."/>
            <person name="Young-Bellido M."/>
            <person name="Zhao G."/>
            <person name="Zook C.A."/>
            <person name="Baltz R.H."/>
            <person name="Jaskunas S.R."/>
            <person name="Rosteck P.R. Jr."/>
            <person name="Skatrud P.L."/>
            <person name="Glass J.I."/>
        </authorList>
    </citation>
    <scope>NUCLEOTIDE SEQUENCE [LARGE SCALE GENOMIC DNA]</scope>
    <source>
        <strain>ATCC BAA-255 / R6</strain>
    </source>
</reference>
<feature type="chain" id="PRO_0000135534" description="Queuine tRNA-ribosyltransferase">
    <location>
        <begin position="1"/>
        <end position="380"/>
    </location>
</feature>
<feature type="region of interest" description="RNA binding" evidence="1">
    <location>
        <begin position="251"/>
        <end position="257"/>
    </location>
</feature>
<feature type="region of interest" description="RNA binding; important for wobble base 34 recognition" evidence="1">
    <location>
        <begin position="275"/>
        <end position="279"/>
    </location>
</feature>
<feature type="active site" description="Proton acceptor" evidence="1">
    <location>
        <position position="96"/>
    </location>
</feature>
<feature type="active site" description="Nucleophile" evidence="1">
    <location>
        <position position="270"/>
    </location>
</feature>
<feature type="binding site" evidence="1">
    <location>
        <begin position="96"/>
        <end position="100"/>
    </location>
    <ligand>
        <name>substrate</name>
    </ligand>
</feature>
<feature type="binding site" evidence="1">
    <location>
        <position position="150"/>
    </location>
    <ligand>
        <name>substrate</name>
    </ligand>
</feature>
<feature type="binding site" evidence="1">
    <location>
        <position position="193"/>
    </location>
    <ligand>
        <name>substrate</name>
    </ligand>
</feature>
<feature type="binding site" evidence="1">
    <location>
        <position position="220"/>
    </location>
    <ligand>
        <name>substrate</name>
    </ligand>
</feature>
<feature type="binding site" evidence="1">
    <location>
        <position position="308"/>
    </location>
    <ligand>
        <name>Zn(2+)</name>
        <dbReference type="ChEBI" id="CHEBI:29105"/>
    </ligand>
</feature>
<feature type="binding site" evidence="1">
    <location>
        <position position="310"/>
    </location>
    <ligand>
        <name>Zn(2+)</name>
        <dbReference type="ChEBI" id="CHEBI:29105"/>
    </ligand>
</feature>
<feature type="binding site" evidence="1">
    <location>
        <position position="313"/>
    </location>
    <ligand>
        <name>Zn(2+)</name>
        <dbReference type="ChEBI" id="CHEBI:29105"/>
    </ligand>
</feature>
<feature type="binding site" evidence="1">
    <location>
        <position position="339"/>
    </location>
    <ligand>
        <name>Zn(2+)</name>
        <dbReference type="ChEBI" id="CHEBI:29105"/>
    </ligand>
</feature>